<reference key="1">
    <citation type="journal article" date="2003" name="Nat. Biotechnol.">
        <title>The genome sequence of the entomopathogenic bacterium Photorhabdus luminescens.</title>
        <authorList>
            <person name="Duchaud E."/>
            <person name="Rusniok C."/>
            <person name="Frangeul L."/>
            <person name="Buchrieser C."/>
            <person name="Givaudan A."/>
            <person name="Taourit S."/>
            <person name="Bocs S."/>
            <person name="Boursaux-Eude C."/>
            <person name="Chandler M."/>
            <person name="Charles J.-F."/>
            <person name="Dassa E."/>
            <person name="Derose R."/>
            <person name="Derzelle S."/>
            <person name="Freyssinet G."/>
            <person name="Gaudriault S."/>
            <person name="Medigue C."/>
            <person name="Lanois A."/>
            <person name="Powell K."/>
            <person name="Siguier P."/>
            <person name="Vincent R."/>
            <person name="Wingate V."/>
            <person name="Zouine M."/>
            <person name="Glaser P."/>
            <person name="Boemare N."/>
            <person name="Danchin A."/>
            <person name="Kunst F."/>
        </authorList>
    </citation>
    <scope>NUCLEOTIDE SEQUENCE [LARGE SCALE GENOMIC DNA]</scope>
    <source>
        <strain>DSM 15139 / CIP 105565 / TT01</strain>
    </source>
</reference>
<name>RLMD_PHOLL</name>
<accession>Q7N839</accession>
<dbReference type="EC" id="2.1.1.190" evidence="1"/>
<dbReference type="EMBL" id="BX571862">
    <property type="protein sequence ID" value="CAE13204.1"/>
    <property type="molecule type" value="Genomic_DNA"/>
</dbReference>
<dbReference type="RefSeq" id="WP_011145274.1">
    <property type="nucleotide sequence ID" value="NC_005126.1"/>
</dbReference>
<dbReference type="SMR" id="Q7N839"/>
<dbReference type="STRING" id="243265.plu0909"/>
<dbReference type="GeneID" id="48847199"/>
<dbReference type="KEGG" id="plu:plu0909"/>
<dbReference type="eggNOG" id="COG2265">
    <property type="taxonomic scope" value="Bacteria"/>
</dbReference>
<dbReference type="HOGENOM" id="CLU_014689_8_2_6"/>
<dbReference type="OrthoDB" id="9804590at2"/>
<dbReference type="Proteomes" id="UP000002514">
    <property type="component" value="Chromosome"/>
</dbReference>
<dbReference type="GO" id="GO:0051539">
    <property type="term" value="F:4 iron, 4 sulfur cluster binding"/>
    <property type="evidence" value="ECO:0007669"/>
    <property type="project" value="UniProtKB-KW"/>
</dbReference>
<dbReference type="GO" id="GO:0005506">
    <property type="term" value="F:iron ion binding"/>
    <property type="evidence" value="ECO:0007669"/>
    <property type="project" value="UniProtKB-UniRule"/>
</dbReference>
<dbReference type="GO" id="GO:0003723">
    <property type="term" value="F:RNA binding"/>
    <property type="evidence" value="ECO:0007669"/>
    <property type="project" value="InterPro"/>
</dbReference>
<dbReference type="GO" id="GO:0070041">
    <property type="term" value="F:rRNA (uridine-C5-)-methyltransferase activity"/>
    <property type="evidence" value="ECO:0007669"/>
    <property type="project" value="UniProtKB-UniRule"/>
</dbReference>
<dbReference type="GO" id="GO:0070475">
    <property type="term" value="P:rRNA base methylation"/>
    <property type="evidence" value="ECO:0007669"/>
    <property type="project" value="TreeGrafter"/>
</dbReference>
<dbReference type="CDD" id="cd02440">
    <property type="entry name" value="AdoMet_MTases"/>
    <property type="match status" value="1"/>
</dbReference>
<dbReference type="FunFam" id="3.40.50.150:FF:000009">
    <property type="entry name" value="23S rRNA (Uracil(1939)-C(5))-methyltransferase RlmD"/>
    <property type="match status" value="1"/>
</dbReference>
<dbReference type="FunFam" id="2.40.50.140:FF:000097">
    <property type="entry name" value="23S rRNA (uracil(1939)-C(5))-methyltransferase RlmD"/>
    <property type="match status" value="1"/>
</dbReference>
<dbReference type="Gene3D" id="2.40.50.1070">
    <property type="match status" value="1"/>
</dbReference>
<dbReference type="Gene3D" id="2.40.50.140">
    <property type="entry name" value="Nucleic acid-binding proteins"/>
    <property type="match status" value="1"/>
</dbReference>
<dbReference type="Gene3D" id="3.40.50.150">
    <property type="entry name" value="Vaccinia Virus protein VP39"/>
    <property type="match status" value="1"/>
</dbReference>
<dbReference type="HAMAP" id="MF_01010">
    <property type="entry name" value="23SrRNA_methyltr_RlmD"/>
    <property type="match status" value="1"/>
</dbReference>
<dbReference type="InterPro" id="IPR001566">
    <property type="entry name" value="23S_rRNA_MeTrfase_RlmD"/>
</dbReference>
<dbReference type="InterPro" id="IPR030390">
    <property type="entry name" value="MeTrfase_TrmA_AS"/>
</dbReference>
<dbReference type="InterPro" id="IPR030391">
    <property type="entry name" value="MeTrfase_TrmA_CS"/>
</dbReference>
<dbReference type="InterPro" id="IPR012340">
    <property type="entry name" value="NA-bd_OB-fold"/>
</dbReference>
<dbReference type="InterPro" id="IPR029063">
    <property type="entry name" value="SAM-dependent_MTases_sf"/>
</dbReference>
<dbReference type="InterPro" id="IPR002792">
    <property type="entry name" value="TRAM_dom"/>
</dbReference>
<dbReference type="InterPro" id="IPR010280">
    <property type="entry name" value="U5_MeTrfase_fam"/>
</dbReference>
<dbReference type="NCBIfam" id="NF009639">
    <property type="entry name" value="PRK13168.1"/>
    <property type="match status" value="1"/>
</dbReference>
<dbReference type="NCBIfam" id="TIGR00479">
    <property type="entry name" value="rumA"/>
    <property type="match status" value="1"/>
</dbReference>
<dbReference type="PANTHER" id="PTHR11061:SF49">
    <property type="entry name" value="23S RRNA (URACIL(1939)-C(5))-METHYLTRANSFERASE RLMD"/>
    <property type="match status" value="1"/>
</dbReference>
<dbReference type="PANTHER" id="PTHR11061">
    <property type="entry name" value="RNA M5U METHYLTRANSFERASE"/>
    <property type="match status" value="1"/>
</dbReference>
<dbReference type="Pfam" id="PF01938">
    <property type="entry name" value="TRAM"/>
    <property type="match status" value="1"/>
</dbReference>
<dbReference type="Pfam" id="PF05958">
    <property type="entry name" value="tRNA_U5-meth_tr"/>
    <property type="match status" value="1"/>
</dbReference>
<dbReference type="SUPFAM" id="SSF50249">
    <property type="entry name" value="Nucleic acid-binding proteins"/>
    <property type="match status" value="1"/>
</dbReference>
<dbReference type="SUPFAM" id="SSF53335">
    <property type="entry name" value="S-adenosyl-L-methionine-dependent methyltransferases"/>
    <property type="match status" value="1"/>
</dbReference>
<dbReference type="PROSITE" id="PS51687">
    <property type="entry name" value="SAM_MT_RNA_M5U"/>
    <property type="match status" value="1"/>
</dbReference>
<dbReference type="PROSITE" id="PS50926">
    <property type="entry name" value="TRAM"/>
    <property type="match status" value="1"/>
</dbReference>
<dbReference type="PROSITE" id="PS01230">
    <property type="entry name" value="TRMA_1"/>
    <property type="match status" value="1"/>
</dbReference>
<dbReference type="PROSITE" id="PS01231">
    <property type="entry name" value="TRMA_2"/>
    <property type="match status" value="1"/>
</dbReference>
<sequence length="438" mass="49080">MVQFYSPNRRTVNRHIITVTADNLDAQGQGVARHQGKTIFVAGLLPGEQAQVQLTEEKRQFAKAKLVKRLSDSPYRVNPRCPHFGVCGGCQQQHVAPDLQRESKASVLEHLIRRETGVTVSAKPVILGPEYGYRRRARLGLHYQIKQRQLVIGFRQNQSNELVAIKECPVLRPELEQLLQPLSQCLNSLKAVKRLGHVELVLADNGPLMILRHLDPLKREDKEKLGTFSVQHNVAVYLAADETSLESLNELPEPWYQVDGLKLVFSPRDFIQVNDQVNQQMVAQAIEWLDLQPNDNVLDLFCGMGNFTLPIGRIVQSVVGVEGVATLVANGQYNAKINNLDNISFCHENLEADIHHQPWAKLGFNKVLLDPARAGAVGVMSHIVELVPEKVVYVSCNPTTLARDSKILLEAGYQIISVRMLDMFPHTGHLESMALFSR</sequence>
<gene>
    <name evidence="1" type="primary">rlmD</name>
    <name type="synonym">rumA</name>
    <name type="ordered locus">plu0909</name>
</gene>
<evidence type="ECO:0000255" key="1">
    <source>
        <dbReference type="HAMAP-Rule" id="MF_01010"/>
    </source>
</evidence>
<proteinExistence type="inferred from homology"/>
<comment type="function">
    <text evidence="1">Catalyzes the formation of 5-methyl-uridine at position 1939 (m5U1939) in 23S rRNA.</text>
</comment>
<comment type="catalytic activity">
    <reaction evidence="1">
        <text>uridine(1939) in 23S rRNA + S-adenosyl-L-methionine = 5-methyluridine(1939) in 23S rRNA + S-adenosyl-L-homocysteine + H(+)</text>
        <dbReference type="Rhea" id="RHEA:42908"/>
        <dbReference type="Rhea" id="RHEA-COMP:10278"/>
        <dbReference type="Rhea" id="RHEA-COMP:10279"/>
        <dbReference type="ChEBI" id="CHEBI:15378"/>
        <dbReference type="ChEBI" id="CHEBI:57856"/>
        <dbReference type="ChEBI" id="CHEBI:59789"/>
        <dbReference type="ChEBI" id="CHEBI:65315"/>
        <dbReference type="ChEBI" id="CHEBI:74447"/>
        <dbReference type="EC" id="2.1.1.190"/>
    </reaction>
</comment>
<comment type="similarity">
    <text evidence="1">Belongs to the class I-like SAM-binding methyltransferase superfamily. RNA M5U methyltransferase family. RlmD subfamily.</text>
</comment>
<keyword id="KW-0004">4Fe-4S</keyword>
<keyword id="KW-0408">Iron</keyword>
<keyword id="KW-0411">Iron-sulfur</keyword>
<keyword id="KW-0479">Metal-binding</keyword>
<keyword id="KW-0489">Methyltransferase</keyword>
<keyword id="KW-1185">Reference proteome</keyword>
<keyword id="KW-0698">rRNA processing</keyword>
<keyword id="KW-0949">S-adenosyl-L-methionine</keyword>
<keyword id="KW-0808">Transferase</keyword>
<feature type="chain" id="PRO_0000161905" description="23S rRNA (uracil(1939)-C(5))-methyltransferase RlmD">
    <location>
        <begin position="1"/>
        <end position="438"/>
    </location>
</feature>
<feature type="domain" description="TRAM" evidence="1">
    <location>
        <begin position="9"/>
        <end position="68"/>
    </location>
</feature>
<feature type="active site" description="Nucleophile" evidence="1">
    <location>
        <position position="396"/>
    </location>
</feature>
<feature type="binding site" evidence="1">
    <location>
        <position position="81"/>
    </location>
    <ligand>
        <name>[4Fe-4S] cluster</name>
        <dbReference type="ChEBI" id="CHEBI:49883"/>
    </ligand>
</feature>
<feature type="binding site" evidence="1">
    <location>
        <position position="87"/>
    </location>
    <ligand>
        <name>[4Fe-4S] cluster</name>
        <dbReference type="ChEBI" id="CHEBI:49883"/>
    </ligand>
</feature>
<feature type="binding site" evidence="1">
    <location>
        <position position="90"/>
    </location>
    <ligand>
        <name>[4Fe-4S] cluster</name>
        <dbReference type="ChEBI" id="CHEBI:49883"/>
    </ligand>
</feature>
<feature type="binding site" evidence="1">
    <location>
        <position position="168"/>
    </location>
    <ligand>
        <name>[4Fe-4S] cluster</name>
        <dbReference type="ChEBI" id="CHEBI:49883"/>
    </ligand>
</feature>
<feature type="binding site" evidence="1">
    <location>
        <position position="272"/>
    </location>
    <ligand>
        <name>S-adenosyl-L-methionine</name>
        <dbReference type="ChEBI" id="CHEBI:59789"/>
    </ligand>
</feature>
<feature type="binding site" evidence="1">
    <location>
        <position position="301"/>
    </location>
    <ligand>
        <name>S-adenosyl-L-methionine</name>
        <dbReference type="ChEBI" id="CHEBI:59789"/>
    </ligand>
</feature>
<feature type="binding site" evidence="1">
    <location>
        <position position="306"/>
    </location>
    <ligand>
        <name>S-adenosyl-L-methionine</name>
        <dbReference type="ChEBI" id="CHEBI:59789"/>
    </ligand>
</feature>
<feature type="binding site" evidence="1">
    <location>
        <position position="322"/>
    </location>
    <ligand>
        <name>S-adenosyl-L-methionine</name>
        <dbReference type="ChEBI" id="CHEBI:59789"/>
    </ligand>
</feature>
<feature type="binding site" evidence="1">
    <location>
        <position position="349"/>
    </location>
    <ligand>
        <name>S-adenosyl-L-methionine</name>
        <dbReference type="ChEBI" id="CHEBI:59789"/>
    </ligand>
</feature>
<feature type="binding site" evidence="1">
    <location>
        <position position="370"/>
    </location>
    <ligand>
        <name>S-adenosyl-L-methionine</name>
        <dbReference type="ChEBI" id="CHEBI:59789"/>
    </ligand>
</feature>
<protein>
    <recommendedName>
        <fullName evidence="1">23S rRNA (uracil(1939)-C(5))-methyltransferase RlmD</fullName>
        <ecNumber evidence="1">2.1.1.190</ecNumber>
    </recommendedName>
    <alternativeName>
        <fullName evidence="1">23S rRNA(m5U1939)-methyltransferase</fullName>
    </alternativeName>
</protein>
<organism>
    <name type="scientific">Photorhabdus laumondii subsp. laumondii (strain DSM 15139 / CIP 105565 / TT01)</name>
    <name type="common">Photorhabdus luminescens subsp. laumondii</name>
    <dbReference type="NCBI Taxonomy" id="243265"/>
    <lineage>
        <taxon>Bacteria</taxon>
        <taxon>Pseudomonadati</taxon>
        <taxon>Pseudomonadota</taxon>
        <taxon>Gammaproteobacteria</taxon>
        <taxon>Enterobacterales</taxon>
        <taxon>Morganellaceae</taxon>
        <taxon>Photorhabdus</taxon>
    </lineage>
</organism>